<keyword id="KW-0378">Hydrolase</keyword>
<keyword id="KW-0460">Magnesium</keyword>
<keyword id="KW-0464">Manganese</keyword>
<keyword id="KW-0479">Metal-binding</keyword>
<keyword id="KW-1185">Reference proteome</keyword>
<feature type="chain" id="PRO_0000315573" description="Uncharacterized Nudix hydrolase NudL">
    <location>
        <begin position="1"/>
        <end position="192"/>
    </location>
</feature>
<feature type="domain" description="Nudix hydrolase" evidence="1">
    <location>
        <begin position="29"/>
        <end position="160"/>
    </location>
</feature>
<feature type="short sequence motif" description="Nudix box">
    <location>
        <begin position="67"/>
        <end position="89"/>
    </location>
</feature>
<feature type="binding site" evidence="1">
    <location>
        <position position="83"/>
    </location>
    <ligand>
        <name>Mg(2+)</name>
        <dbReference type="ChEBI" id="CHEBI:18420"/>
    </ligand>
</feature>
<feature type="binding site" evidence="1">
    <location>
        <position position="87"/>
    </location>
    <ligand>
        <name>Mg(2+)</name>
        <dbReference type="ChEBI" id="CHEBI:18420"/>
    </ligand>
</feature>
<sequence length="192" mass="21512">MEYRSLTLDYFLSRFQLLRPQINRETLNHRQAAVLIPIVRRPQPGLLLTQRSIHLRKHAGQVAFPGGAVDDTDASVIAAALREAEEEVAIPPSAVEVIGVLPPVDSVTGYQVTPVVGIIPPDLPYRASEDEVSAVFEMPLAQALHLGRYHPLDIYRRGDSHRVWLSWYEQYFVWGMTAGIIRELALQIGVKP</sequence>
<dbReference type="EC" id="3.6.1.-" evidence="1"/>
<dbReference type="EMBL" id="CP000800">
    <property type="protein sequence ID" value="ABV18449.1"/>
    <property type="molecule type" value="Genomic_DNA"/>
</dbReference>
<dbReference type="RefSeq" id="WP_000456740.1">
    <property type="nucleotide sequence ID" value="NC_009801.1"/>
</dbReference>
<dbReference type="SMR" id="A7ZMT6"/>
<dbReference type="KEGG" id="ecw:EcE24377A_2041"/>
<dbReference type="HOGENOM" id="CLU_040940_5_2_6"/>
<dbReference type="Proteomes" id="UP000001122">
    <property type="component" value="Chromosome"/>
</dbReference>
<dbReference type="GO" id="GO:0010945">
    <property type="term" value="F:coenzyme A diphosphatase activity"/>
    <property type="evidence" value="ECO:0007669"/>
    <property type="project" value="InterPro"/>
</dbReference>
<dbReference type="GO" id="GO:0000287">
    <property type="term" value="F:magnesium ion binding"/>
    <property type="evidence" value="ECO:0007669"/>
    <property type="project" value="UniProtKB-UniRule"/>
</dbReference>
<dbReference type="GO" id="GO:0030145">
    <property type="term" value="F:manganese ion binding"/>
    <property type="evidence" value="ECO:0007669"/>
    <property type="project" value="UniProtKB-UniRule"/>
</dbReference>
<dbReference type="GO" id="GO:0009132">
    <property type="term" value="P:nucleoside diphosphate metabolic process"/>
    <property type="evidence" value="ECO:0007669"/>
    <property type="project" value="InterPro"/>
</dbReference>
<dbReference type="CDD" id="cd03426">
    <property type="entry name" value="NUDIX_CoAse_Nudt7"/>
    <property type="match status" value="1"/>
</dbReference>
<dbReference type="FunFam" id="3.90.79.10:FF:000013">
    <property type="entry name" value="Uncharacterized Nudix hydrolase NudL"/>
    <property type="match status" value="1"/>
</dbReference>
<dbReference type="Gene3D" id="3.90.79.10">
    <property type="entry name" value="Nucleoside Triphosphate Pyrophosphohydrolase"/>
    <property type="match status" value="1"/>
</dbReference>
<dbReference type="HAMAP" id="MF_01592">
    <property type="entry name" value="Nudix_NudL"/>
    <property type="match status" value="1"/>
</dbReference>
<dbReference type="InterPro" id="IPR045121">
    <property type="entry name" value="CoAse"/>
</dbReference>
<dbReference type="InterPro" id="IPR015797">
    <property type="entry name" value="NUDIX_hydrolase-like_dom_sf"/>
</dbReference>
<dbReference type="InterPro" id="IPR000086">
    <property type="entry name" value="NUDIX_hydrolase_dom"/>
</dbReference>
<dbReference type="InterPro" id="IPR000059">
    <property type="entry name" value="NUDIX_hydrolase_NudL_CS"/>
</dbReference>
<dbReference type="InterPro" id="IPR023735">
    <property type="entry name" value="Nudix_NudL"/>
</dbReference>
<dbReference type="NCBIfam" id="NF007980">
    <property type="entry name" value="PRK10707.1"/>
    <property type="match status" value="1"/>
</dbReference>
<dbReference type="PANTHER" id="PTHR12992:SF11">
    <property type="entry name" value="MITOCHONDRIAL COENZYME A DIPHOSPHATASE NUDT8"/>
    <property type="match status" value="1"/>
</dbReference>
<dbReference type="PANTHER" id="PTHR12992">
    <property type="entry name" value="NUDIX HYDROLASE"/>
    <property type="match status" value="1"/>
</dbReference>
<dbReference type="Pfam" id="PF00293">
    <property type="entry name" value="NUDIX"/>
    <property type="match status" value="1"/>
</dbReference>
<dbReference type="SUPFAM" id="SSF55811">
    <property type="entry name" value="Nudix"/>
    <property type="match status" value="1"/>
</dbReference>
<dbReference type="PROSITE" id="PS51462">
    <property type="entry name" value="NUDIX"/>
    <property type="match status" value="1"/>
</dbReference>
<dbReference type="PROSITE" id="PS01293">
    <property type="entry name" value="NUDIX_COA"/>
    <property type="match status" value="1"/>
</dbReference>
<proteinExistence type="inferred from homology"/>
<name>NUDL_ECO24</name>
<comment type="function">
    <text evidence="1">Probably mediates the hydrolysis of some nucleoside diphosphate derivatives.</text>
</comment>
<comment type="cofactor">
    <cofactor evidence="1">
        <name>Mn(2+)</name>
        <dbReference type="ChEBI" id="CHEBI:29035"/>
    </cofactor>
    <cofactor evidence="1">
        <name>Mg(2+)</name>
        <dbReference type="ChEBI" id="CHEBI:18420"/>
    </cofactor>
</comment>
<comment type="similarity">
    <text evidence="1">Belongs to the Nudix hydrolase family. PCD1 subfamily.</text>
</comment>
<accession>A7ZMT6</accession>
<gene>
    <name evidence="1" type="primary">nudL</name>
    <name type="ordered locus">EcE24377A_2041</name>
</gene>
<evidence type="ECO:0000255" key="1">
    <source>
        <dbReference type="HAMAP-Rule" id="MF_01592"/>
    </source>
</evidence>
<protein>
    <recommendedName>
        <fullName evidence="1">Uncharacterized Nudix hydrolase NudL</fullName>
        <ecNumber evidence="1">3.6.1.-</ecNumber>
    </recommendedName>
</protein>
<organism>
    <name type="scientific">Escherichia coli O139:H28 (strain E24377A / ETEC)</name>
    <dbReference type="NCBI Taxonomy" id="331111"/>
    <lineage>
        <taxon>Bacteria</taxon>
        <taxon>Pseudomonadati</taxon>
        <taxon>Pseudomonadota</taxon>
        <taxon>Gammaproteobacteria</taxon>
        <taxon>Enterobacterales</taxon>
        <taxon>Enterobacteriaceae</taxon>
        <taxon>Escherichia</taxon>
    </lineage>
</organism>
<reference key="1">
    <citation type="journal article" date="2008" name="J. Bacteriol.">
        <title>The pangenome structure of Escherichia coli: comparative genomic analysis of E. coli commensal and pathogenic isolates.</title>
        <authorList>
            <person name="Rasko D.A."/>
            <person name="Rosovitz M.J."/>
            <person name="Myers G.S.A."/>
            <person name="Mongodin E.F."/>
            <person name="Fricke W.F."/>
            <person name="Gajer P."/>
            <person name="Crabtree J."/>
            <person name="Sebaihia M."/>
            <person name="Thomson N.R."/>
            <person name="Chaudhuri R."/>
            <person name="Henderson I.R."/>
            <person name="Sperandio V."/>
            <person name="Ravel J."/>
        </authorList>
    </citation>
    <scope>NUCLEOTIDE SEQUENCE [LARGE SCALE GENOMIC DNA]</scope>
    <source>
        <strain>E24377A / ETEC</strain>
    </source>
</reference>